<feature type="chain" id="PRO_1000066211" description="Orotate phosphoribosyltransferase">
    <location>
        <begin position="1"/>
        <end position="185"/>
    </location>
</feature>
<feature type="binding site" evidence="1">
    <location>
        <position position="98"/>
    </location>
    <ligand>
        <name>5-phospho-alpha-D-ribose 1-diphosphate</name>
        <dbReference type="ChEBI" id="CHEBI:58017"/>
        <note>ligand shared between dimeric partners</note>
    </ligand>
</feature>
<feature type="binding site" description="in other chain" evidence="1">
    <location>
        <position position="99"/>
    </location>
    <ligand>
        <name>5-phospho-alpha-D-ribose 1-diphosphate</name>
        <dbReference type="ChEBI" id="CHEBI:58017"/>
        <note>ligand shared between dimeric partners</note>
    </ligand>
</feature>
<feature type="binding site" evidence="1">
    <location>
        <position position="102"/>
    </location>
    <ligand>
        <name>5-phospho-alpha-D-ribose 1-diphosphate</name>
        <dbReference type="ChEBI" id="CHEBI:58017"/>
        <note>ligand shared between dimeric partners</note>
    </ligand>
</feature>
<feature type="binding site" evidence="1">
    <location>
        <position position="104"/>
    </location>
    <ligand>
        <name>5-phospho-alpha-D-ribose 1-diphosphate</name>
        <dbReference type="ChEBI" id="CHEBI:58017"/>
        <note>ligand shared between dimeric partners</note>
    </ligand>
</feature>
<feature type="binding site" description="in other chain" evidence="1">
    <location>
        <begin position="128"/>
        <end position="136"/>
    </location>
    <ligand>
        <name>5-phospho-alpha-D-ribose 1-diphosphate</name>
        <dbReference type="ChEBI" id="CHEBI:58017"/>
        <note>ligand shared between dimeric partners</note>
    </ligand>
</feature>
<feature type="binding site" evidence="1">
    <location>
        <position position="132"/>
    </location>
    <ligand>
        <name>orotate</name>
        <dbReference type="ChEBI" id="CHEBI:30839"/>
    </ligand>
</feature>
<feature type="binding site" evidence="1">
    <location>
        <position position="160"/>
    </location>
    <ligand>
        <name>orotate</name>
        <dbReference type="ChEBI" id="CHEBI:30839"/>
    </ligand>
</feature>
<gene>
    <name evidence="1" type="primary">pyrE</name>
    <name type="ordered locus">BBta_7360</name>
</gene>
<dbReference type="EC" id="2.4.2.10" evidence="1"/>
<dbReference type="EMBL" id="CP000494">
    <property type="protein sequence ID" value="ABQ39224.1"/>
    <property type="molecule type" value="Genomic_DNA"/>
</dbReference>
<dbReference type="RefSeq" id="WP_012047127.1">
    <property type="nucleotide sequence ID" value="NC_009485.1"/>
</dbReference>
<dbReference type="SMR" id="A5EST0"/>
<dbReference type="STRING" id="288000.BBta_7360"/>
<dbReference type="KEGG" id="bbt:BBta_7360"/>
<dbReference type="eggNOG" id="COG0461">
    <property type="taxonomic scope" value="Bacteria"/>
</dbReference>
<dbReference type="HOGENOM" id="CLU_074878_2_1_5"/>
<dbReference type="OrthoDB" id="9779060at2"/>
<dbReference type="UniPathway" id="UPA00070">
    <property type="reaction ID" value="UER00119"/>
</dbReference>
<dbReference type="Proteomes" id="UP000000246">
    <property type="component" value="Chromosome"/>
</dbReference>
<dbReference type="GO" id="GO:0000287">
    <property type="term" value="F:magnesium ion binding"/>
    <property type="evidence" value="ECO:0007669"/>
    <property type="project" value="UniProtKB-UniRule"/>
</dbReference>
<dbReference type="GO" id="GO:0004588">
    <property type="term" value="F:orotate phosphoribosyltransferase activity"/>
    <property type="evidence" value="ECO:0007669"/>
    <property type="project" value="UniProtKB-UniRule"/>
</dbReference>
<dbReference type="GO" id="GO:0044205">
    <property type="term" value="P:'de novo' UMP biosynthetic process"/>
    <property type="evidence" value="ECO:0007669"/>
    <property type="project" value="UniProtKB-UniRule"/>
</dbReference>
<dbReference type="GO" id="GO:0019856">
    <property type="term" value="P:pyrimidine nucleobase biosynthetic process"/>
    <property type="evidence" value="ECO:0007669"/>
    <property type="project" value="TreeGrafter"/>
</dbReference>
<dbReference type="CDD" id="cd06223">
    <property type="entry name" value="PRTases_typeI"/>
    <property type="match status" value="1"/>
</dbReference>
<dbReference type="FunFam" id="3.40.50.2020:FF:000029">
    <property type="entry name" value="Orotate phosphoribosyltransferase"/>
    <property type="match status" value="1"/>
</dbReference>
<dbReference type="Gene3D" id="3.40.50.2020">
    <property type="match status" value="1"/>
</dbReference>
<dbReference type="HAMAP" id="MF_01208">
    <property type="entry name" value="PyrE"/>
    <property type="match status" value="1"/>
</dbReference>
<dbReference type="InterPro" id="IPR023031">
    <property type="entry name" value="OPRT"/>
</dbReference>
<dbReference type="InterPro" id="IPR004467">
    <property type="entry name" value="Or_phspho_trans_dom"/>
</dbReference>
<dbReference type="InterPro" id="IPR000836">
    <property type="entry name" value="PRibTrfase_dom"/>
</dbReference>
<dbReference type="InterPro" id="IPR029057">
    <property type="entry name" value="PRTase-like"/>
</dbReference>
<dbReference type="NCBIfam" id="TIGR00336">
    <property type="entry name" value="pyrE"/>
    <property type="match status" value="1"/>
</dbReference>
<dbReference type="PANTHER" id="PTHR19278">
    <property type="entry name" value="OROTATE PHOSPHORIBOSYLTRANSFERASE"/>
    <property type="match status" value="1"/>
</dbReference>
<dbReference type="PANTHER" id="PTHR19278:SF9">
    <property type="entry name" value="URIDINE 5'-MONOPHOSPHATE SYNTHASE"/>
    <property type="match status" value="1"/>
</dbReference>
<dbReference type="Pfam" id="PF00156">
    <property type="entry name" value="Pribosyltran"/>
    <property type="match status" value="1"/>
</dbReference>
<dbReference type="SUPFAM" id="SSF53271">
    <property type="entry name" value="PRTase-like"/>
    <property type="match status" value="1"/>
</dbReference>
<accession>A5EST0</accession>
<comment type="function">
    <text evidence="1">Catalyzes the transfer of a ribosyl phosphate group from 5-phosphoribose 1-diphosphate to orotate, leading to the formation of orotidine monophosphate (OMP).</text>
</comment>
<comment type="catalytic activity">
    <reaction evidence="1">
        <text>orotidine 5'-phosphate + diphosphate = orotate + 5-phospho-alpha-D-ribose 1-diphosphate</text>
        <dbReference type="Rhea" id="RHEA:10380"/>
        <dbReference type="ChEBI" id="CHEBI:30839"/>
        <dbReference type="ChEBI" id="CHEBI:33019"/>
        <dbReference type="ChEBI" id="CHEBI:57538"/>
        <dbReference type="ChEBI" id="CHEBI:58017"/>
        <dbReference type="EC" id="2.4.2.10"/>
    </reaction>
</comment>
<comment type="cofactor">
    <cofactor evidence="1">
        <name>Mg(2+)</name>
        <dbReference type="ChEBI" id="CHEBI:18420"/>
    </cofactor>
</comment>
<comment type="pathway">
    <text evidence="1">Pyrimidine metabolism; UMP biosynthesis via de novo pathway; UMP from orotate: step 1/2.</text>
</comment>
<comment type="subunit">
    <text evidence="1">Homodimer.</text>
</comment>
<comment type="similarity">
    <text evidence="1">Belongs to the purine/pyrimidine phosphoribosyltransferase family. PyrE subfamily.</text>
</comment>
<keyword id="KW-0328">Glycosyltransferase</keyword>
<keyword id="KW-0460">Magnesium</keyword>
<keyword id="KW-0665">Pyrimidine biosynthesis</keyword>
<keyword id="KW-1185">Reference proteome</keyword>
<keyword id="KW-0808">Transferase</keyword>
<organism>
    <name type="scientific">Bradyrhizobium sp. (strain BTAi1 / ATCC BAA-1182)</name>
    <dbReference type="NCBI Taxonomy" id="288000"/>
    <lineage>
        <taxon>Bacteria</taxon>
        <taxon>Pseudomonadati</taxon>
        <taxon>Pseudomonadota</taxon>
        <taxon>Alphaproteobacteria</taxon>
        <taxon>Hyphomicrobiales</taxon>
        <taxon>Nitrobacteraceae</taxon>
        <taxon>Bradyrhizobium</taxon>
    </lineage>
</organism>
<reference key="1">
    <citation type="journal article" date="2007" name="Science">
        <title>Legumes symbioses: absence of nod genes in photosynthetic bradyrhizobia.</title>
        <authorList>
            <person name="Giraud E."/>
            <person name="Moulin L."/>
            <person name="Vallenet D."/>
            <person name="Barbe V."/>
            <person name="Cytryn E."/>
            <person name="Avarre J.-C."/>
            <person name="Jaubert M."/>
            <person name="Simon D."/>
            <person name="Cartieaux F."/>
            <person name="Prin Y."/>
            <person name="Bena G."/>
            <person name="Hannibal L."/>
            <person name="Fardoux J."/>
            <person name="Kojadinovic M."/>
            <person name="Vuillet L."/>
            <person name="Lajus A."/>
            <person name="Cruveiller S."/>
            <person name="Rouy Z."/>
            <person name="Mangenot S."/>
            <person name="Segurens B."/>
            <person name="Dossat C."/>
            <person name="Franck W.L."/>
            <person name="Chang W.-S."/>
            <person name="Saunders E."/>
            <person name="Bruce D."/>
            <person name="Richardson P."/>
            <person name="Normand P."/>
            <person name="Dreyfus B."/>
            <person name="Pignol D."/>
            <person name="Stacey G."/>
            <person name="Emerich D."/>
            <person name="Vermeglio A."/>
            <person name="Medigue C."/>
            <person name="Sadowsky M."/>
        </authorList>
    </citation>
    <scope>NUCLEOTIDE SEQUENCE [LARGE SCALE GENOMIC DNA]</scope>
    <source>
        <strain>BTAi1 / ATCC BAA-1182</strain>
    </source>
</reference>
<evidence type="ECO:0000255" key="1">
    <source>
        <dbReference type="HAMAP-Rule" id="MF_01208"/>
    </source>
</evidence>
<sequence>MSKSASRARLLEIIRRRSFGRGEVTLASGRKSDFYFNLKPTMMDPEGATLLAELTYEALKDEGFDYIGGLEMGAVPLAGAIAQISWIKGHPIAAFFVRKKPKEHGAKLAIEGLTRDETLAGKRIVVVEDVTTTGGSAMKAVETLREAGANVSLVFTMVDREEGAAETFAAAGLPFRALYKAREFL</sequence>
<name>PYRE_BRASB</name>
<protein>
    <recommendedName>
        <fullName evidence="1">Orotate phosphoribosyltransferase</fullName>
        <shortName evidence="1">OPRT</shortName>
        <shortName evidence="1">OPRTase</shortName>
        <ecNumber evidence="1">2.4.2.10</ecNumber>
    </recommendedName>
</protein>
<proteinExistence type="inferred from homology"/>